<sequence>MVHFTAEEKAAITSLWGKMNVEEAGGEALGRLLVVYPWTQRFFDNFGNLSSPSAILGNPKVKAHGKKVLTSFGDAIKNMDNLKTTFAKLSELHCDKLHVDPENFRLLGNVMVIILATHFGKEFTPEVQAAWQKLVSAVAIALGHKYH</sequence>
<gene>
    <name type="primary">HBE1</name>
</gene>
<dbReference type="EMBL" id="L25365">
    <property type="protein sequence ID" value="AAA35443.1"/>
    <property type="molecule type" value="Genomic_DNA"/>
</dbReference>
<dbReference type="SMR" id="P68021"/>
<dbReference type="GO" id="GO:0072562">
    <property type="term" value="C:blood microparticle"/>
    <property type="evidence" value="ECO:0007669"/>
    <property type="project" value="TreeGrafter"/>
</dbReference>
<dbReference type="GO" id="GO:0031838">
    <property type="term" value="C:haptoglobin-hemoglobin complex"/>
    <property type="evidence" value="ECO:0007669"/>
    <property type="project" value="TreeGrafter"/>
</dbReference>
<dbReference type="GO" id="GO:0005833">
    <property type="term" value="C:hemoglobin complex"/>
    <property type="evidence" value="ECO:0007669"/>
    <property type="project" value="InterPro"/>
</dbReference>
<dbReference type="GO" id="GO:0031720">
    <property type="term" value="F:haptoglobin binding"/>
    <property type="evidence" value="ECO:0007669"/>
    <property type="project" value="TreeGrafter"/>
</dbReference>
<dbReference type="GO" id="GO:0020037">
    <property type="term" value="F:heme binding"/>
    <property type="evidence" value="ECO:0007669"/>
    <property type="project" value="InterPro"/>
</dbReference>
<dbReference type="GO" id="GO:0031721">
    <property type="term" value="F:hemoglobin alpha binding"/>
    <property type="evidence" value="ECO:0007669"/>
    <property type="project" value="TreeGrafter"/>
</dbReference>
<dbReference type="GO" id="GO:0046872">
    <property type="term" value="F:metal ion binding"/>
    <property type="evidence" value="ECO:0007669"/>
    <property type="project" value="UniProtKB-KW"/>
</dbReference>
<dbReference type="GO" id="GO:0043177">
    <property type="term" value="F:organic acid binding"/>
    <property type="evidence" value="ECO:0007669"/>
    <property type="project" value="TreeGrafter"/>
</dbReference>
<dbReference type="GO" id="GO:0019825">
    <property type="term" value="F:oxygen binding"/>
    <property type="evidence" value="ECO:0007669"/>
    <property type="project" value="InterPro"/>
</dbReference>
<dbReference type="GO" id="GO:0005344">
    <property type="term" value="F:oxygen carrier activity"/>
    <property type="evidence" value="ECO:0007669"/>
    <property type="project" value="UniProtKB-KW"/>
</dbReference>
<dbReference type="GO" id="GO:0004601">
    <property type="term" value="F:peroxidase activity"/>
    <property type="evidence" value="ECO:0007669"/>
    <property type="project" value="TreeGrafter"/>
</dbReference>
<dbReference type="GO" id="GO:0042744">
    <property type="term" value="P:hydrogen peroxide catabolic process"/>
    <property type="evidence" value="ECO:0007669"/>
    <property type="project" value="TreeGrafter"/>
</dbReference>
<dbReference type="CDD" id="cd08925">
    <property type="entry name" value="Hb-beta-like"/>
    <property type="match status" value="1"/>
</dbReference>
<dbReference type="FunFam" id="1.10.490.10:FF:000001">
    <property type="entry name" value="Hemoglobin subunit beta"/>
    <property type="match status" value="1"/>
</dbReference>
<dbReference type="Gene3D" id="1.10.490.10">
    <property type="entry name" value="Globins"/>
    <property type="match status" value="1"/>
</dbReference>
<dbReference type="InterPro" id="IPR000971">
    <property type="entry name" value="Globin"/>
</dbReference>
<dbReference type="InterPro" id="IPR009050">
    <property type="entry name" value="Globin-like_sf"/>
</dbReference>
<dbReference type="InterPro" id="IPR012292">
    <property type="entry name" value="Globin/Proto"/>
</dbReference>
<dbReference type="InterPro" id="IPR002337">
    <property type="entry name" value="Hemoglobin_b"/>
</dbReference>
<dbReference type="InterPro" id="IPR050056">
    <property type="entry name" value="Hemoglobin_oxygen_transport"/>
</dbReference>
<dbReference type="PANTHER" id="PTHR11442">
    <property type="entry name" value="HEMOGLOBIN FAMILY MEMBER"/>
    <property type="match status" value="1"/>
</dbReference>
<dbReference type="PANTHER" id="PTHR11442:SF7">
    <property type="entry name" value="HEMOGLOBIN SUBUNIT EPSILON"/>
    <property type="match status" value="1"/>
</dbReference>
<dbReference type="Pfam" id="PF00042">
    <property type="entry name" value="Globin"/>
    <property type="match status" value="1"/>
</dbReference>
<dbReference type="PRINTS" id="PR00814">
    <property type="entry name" value="BETAHAEM"/>
</dbReference>
<dbReference type="SUPFAM" id="SSF46458">
    <property type="entry name" value="Globin-like"/>
    <property type="match status" value="1"/>
</dbReference>
<dbReference type="PROSITE" id="PS01033">
    <property type="entry name" value="GLOBIN"/>
    <property type="match status" value="1"/>
</dbReference>
<reference key="1">
    <citation type="journal article" date="1993" name="Mol. Phylogenet. Evol.">
        <title>Molecular phylogeny of the New World monkeys (Platyrrhini, primates).</title>
        <authorList>
            <person name="Schneider H."/>
            <person name="Schneider M.P.C."/>
            <person name="Sampaio I."/>
            <person name="Harada M.L."/>
            <person name="Stanhope M.J."/>
            <person name="Czekysbuaj J."/>
            <person name="Goodman M."/>
        </authorList>
    </citation>
    <scope>NUCLEOTIDE SEQUENCE [GENOMIC DNA]</scope>
    <source>
        <tissue>Lymphocyte</tissue>
    </source>
</reference>
<protein>
    <recommendedName>
        <fullName>Hemoglobin subunit epsilon</fullName>
    </recommendedName>
    <alternativeName>
        <fullName>Epsilon-globin</fullName>
    </alternativeName>
    <alternativeName>
        <fullName>Hemoglobin epsilon chain</fullName>
    </alternativeName>
</protein>
<keyword id="KW-0349">Heme</keyword>
<keyword id="KW-0408">Iron</keyword>
<keyword id="KW-0479">Metal-binding</keyword>
<keyword id="KW-0561">Oxygen transport</keyword>
<keyword id="KW-0597">Phosphoprotein</keyword>
<keyword id="KW-0813">Transport</keyword>
<feature type="chain" id="PRO_0000053191" description="Hemoglobin subunit epsilon">
    <location>
        <begin position="1"/>
        <end position="147"/>
    </location>
</feature>
<feature type="domain" description="Globin" evidence="2">
    <location>
        <begin position="3"/>
        <end position="147"/>
    </location>
</feature>
<feature type="binding site" description="distal binding residue" evidence="2">
    <location>
        <position position="64"/>
    </location>
    <ligand>
        <name>heme b</name>
        <dbReference type="ChEBI" id="CHEBI:60344"/>
    </ligand>
    <ligandPart>
        <name>Fe</name>
        <dbReference type="ChEBI" id="CHEBI:18248"/>
    </ligandPart>
</feature>
<feature type="binding site" description="proximal binding residue" evidence="2">
    <location>
        <position position="93"/>
    </location>
    <ligand>
        <name>heme b</name>
        <dbReference type="ChEBI" id="CHEBI:60344"/>
    </ligand>
    <ligandPart>
        <name>Fe</name>
        <dbReference type="ChEBI" id="CHEBI:18248"/>
    </ligandPart>
</feature>
<feature type="modified residue" description="Phosphoserine" evidence="1">
    <location>
        <position position="14"/>
    </location>
</feature>
<feature type="modified residue" description="Phosphoserine" evidence="1">
    <location>
        <position position="51"/>
    </location>
</feature>
<comment type="function">
    <text>The epsilon chain is a beta-type chain of early mammalian embryonic hemoglobin.</text>
</comment>
<comment type="subunit">
    <text>Heterotetramer of two alpha chains and two epsilon chains in early embryonic hemoglobin Gower-2; two zeta chains and two epsilon chains in early embryonic hemoglobin Gower-1.</text>
</comment>
<comment type="tissue specificity">
    <text>Red blood cells.</text>
</comment>
<comment type="similarity">
    <text evidence="2">Belongs to the globin family.</text>
</comment>
<accession>P68021</accession>
<accession>P43350</accession>
<proteinExistence type="evidence at transcript level"/>
<evidence type="ECO:0000250" key="1">
    <source>
        <dbReference type="UniProtKB" id="P02100"/>
    </source>
</evidence>
<evidence type="ECO:0000255" key="2">
    <source>
        <dbReference type="PROSITE-ProRule" id="PRU00238"/>
    </source>
</evidence>
<organism>
    <name type="scientific">Cacajao calvus</name>
    <name type="common">Red uakari</name>
    <dbReference type="NCBI Taxonomy" id="30596"/>
    <lineage>
        <taxon>Eukaryota</taxon>
        <taxon>Metazoa</taxon>
        <taxon>Chordata</taxon>
        <taxon>Craniata</taxon>
        <taxon>Vertebrata</taxon>
        <taxon>Euteleostomi</taxon>
        <taxon>Mammalia</taxon>
        <taxon>Eutheria</taxon>
        <taxon>Euarchontoglires</taxon>
        <taxon>Primates</taxon>
        <taxon>Haplorrhini</taxon>
        <taxon>Platyrrhini</taxon>
        <taxon>Pitheciidae</taxon>
        <taxon>Pitheciinae</taxon>
        <taxon>Cacajao</taxon>
    </lineage>
</organism>
<name>HBE_CACCA</name>